<accession>A5IHI0</accession>
<feature type="chain" id="PRO_1000068844" description="Probable alpha-L-glutamate ligase">
    <location>
        <begin position="1"/>
        <end position="302"/>
    </location>
</feature>
<feature type="domain" description="ATP-grasp" evidence="1">
    <location>
        <begin position="105"/>
        <end position="288"/>
    </location>
</feature>
<feature type="binding site" evidence="1">
    <location>
        <position position="142"/>
    </location>
    <ligand>
        <name>ATP</name>
        <dbReference type="ChEBI" id="CHEBI:30616"/>
    </ligand>
</feature>
<feature type="binding site" evidence="1">
    <location>
        <begin position="179"/>
        <end position="180"/>
    </location>
    <ligand>
        <name>ATP</name>
        <dbReference type="ChEBI" id="CHEBI:30616"/>
    </ligand>
</feature>
<feature type="binding site" evidence="1">
    <location>
        <position position="188"/>
    </location>
    <ligand>
        <name>ATP</name>
        <dbReference type="ChEBI" id="CHEBI:30616"/>
    </ligand>
</feature>
<feature type="binding site" evidence="1">
    <location>
        <begin position="212"/>
        <end position="214"/>
    </location>
    <ligand>
        <name>ATP</name>
        <dbReference type="ChEBI" id="CHEBI:30616"/>
    </ligand>
</feature>
<feature type="binding site" evidence="1">
    <location>
        <position position="249"/>
    </location>
    <ligand>
        <name>Mg(2+)</name>
        <dbReference type="ChEBI" id="CHEBI:18420"/>
        <label>1</label>
    </ligand>
</feature>
<feature type="binding site" evidence="1">
    <location>
        <position position="249"/>
    </location>
    <ligand>
        <name>Mn(2+)</name>
        <dbReference type="ChEBI" id="CHEBI:29035"/>
        <label>1</label>
    </ligand>
</feature>
<feature type="binding site" evidence="1">
    <location>
        <position position="261"/>
    </location>
    <ligand>
        <name>Mg(2+)</name>
        <dbReference type="ChEBI" id="CHEBI:18420"/>
        <label>1</label>
    </ligand>
</feature>
<feature type="binding site" evidence="1">
    <location>
        <position position="261"/>
    </location>
    <ligand>
        <name>Mg(2+)</name>
        <dbReference type="ChEBI" id="CHEBI:18420"/>
        <label>2</label>
    </ligand>
</feature>
<feature type="binding site" evidence="1">
    <location>
        <position position="261"/>
    </location>
    <ligand>
        <name>Mn(2+)</name>
        <dbReference type="ChEBI" id="CHEBI:29035"/>
        <label>1</label>
    </ligand>
</feature>
<feature type="binding site" evidence="1">
    <location>
        <position position="261"/>
    </location>
    <ligand>
        <name>Mn(2+)</name>
        <dbReference type="ChEBI" id="CHEBI:29035"/>
        <label>2</label>
    </ligand>
</feature>
<feature type="binding site" evidence="1">
    <location>
        <position position="263"/>
    </location>
    <ligand>
        <name>Mg(2+)</name>
        <dbReference type="ChEBI" id="CHEBI:18420"/>
        <label>2</label>
    </ligand>
</feature>
<feature type="binding site" evidence="1">
    <location>
        <position position="263"/>
    </location>
    <ligand>
        <name>Mn(2+)</name>
        <dbReference type="ChEBI" id="CHEBI:29035"/>
        <label>2</label>
    </ligand>
</feature>
<name>RIMK_LEGPC</name>
<protein>
    <recommendedName>
        <fullName evidence="1">Probable alpha-L-glutamate ligase</fullName>
        <ecNumber evidence="1">6.3.2.-</ecNumber>
    </recommendedName>
</protein>
<sequence length="302" mass="32881">MKIAILATNPHLYSHKRLKAEAEAAGHEVKIINPLYCYMNVAASNPKVHYRGGAPLPHFDAVIPRIGASITYYGTAVLRHMETMGMYTLNESIAISRSRDKFRSLQLLARKGIPMPLTSFAQSPDDTEDLIHMVGGAPLVIKLLEGTQGKGVILADSHQSAVSIINAFKEMHANILVQEFIEESRGTDIRCFVIGEKVVAAVKRQAKDGEFRANVHQGGKAVKVKLSPQERAIAVSAAKTMGLRVAGVDLIRSNHGPLVLEINSSPGLEGIEKATNINLAGKIIEYIEKKAKPISSNHRFHG</sequence>
<dbReference type="EC" id="6.3.2.-" evidence="1"/>
<dbReference type="EMBL" id="CP000675">
    <property type="protein sequence ID" value="ABQ56830.1"/>
    <property type="molecule type" value="Genomic_DNA"/>
</dbReference>
<dbReference type="RefSeq" id="WP_010946163.1">
    <property type="nucleotide sequence ID" value="NZ_JAPMSS010000006.1"/>
</dbReference>
<dbReference type="SMR" id="A5IHI0"/>
<dbReference type="GeneID" id="57034418"/>
<dbReference type="KEGG" id="lpc:LPC_2929"/>
<dbReference type="HOGENOM" id="CLU_054353_0_1_6"/>
<dbReference type="GO" id="GO:0005737">
    <property type="term" value="C:cytoplasm"/>
    <property type="evidence" value="ECO:0007669"/>
    <property type="project" value="TreeGrafter"/>
</dbReference>
<dbReference type="GO" id="GO:0005524">
    <property type="term" value="F:ATP binding"/>
    <property type="evidence" value="ECO:0007669"/>
    <property type="project" value="UniProtKB-UniRule"/>
</dbReference>
<dbReference type="GO" id="GO:0046872">
    <property type="term" value="F:metal ion binding"/>
    <property type="evidence" value="ECO:0007669"/>
    <property type="project" value="UniProtKB-KW"/>
</dbReference>
<dbReference type="GO" id="GO:0018169">
    <property type="term" value="F:ribosomal S6-glutamic acid ligase activity"/>
    <property type="evidence" value="ECO:0007669"/>
    <property type="project" value="TreeGrafter"/>
</dbReference>
<dbReference type="GO" id="GO:0036211">
    <property type="term" value="P:protein modification process"/>
    <property type="evidence" value="ECO:0007669"/>
    <property type="project" value="InterPro"/>
</dbReference>
<dbReference type="GO" id="GO:0009432">
    <property type="term" value="P:SOS response"/>
    <property type="evidence" value="ECO:0007669"/>
    <property type="project" value="TreeGrafter"/>
</dbReference>
<dbReference type="GO" id="GO:0006412">
    <property type="term" value="P:translation"/>
    <property type="evidence" value="ECO:0007669"/>
    <property type="project" value="UniProtKB-KW"/>
</dbReference>
<dbReference type="FunFam" id="3.30.470.20:FF:000058">
    <property type="entry name" value="Alpha-aminoadipate--LysW ligase LysX protein"/>
    <property type="match status" value="1"/>
</dbReference>
<dbReference type="FunFam" id="3.30.1490.20:FF:000005">
    <property type="entry name" value="Probable alpha-L-glutamate ligase 1"/>
    <property type="match status" value="1"/>
</dbReference>
<dbReference type="Gene3D" id="3.40.50.20">
    <property type="match status" value="1"/>
</dbReference>
<dbReference type="Gene3D" id="3.30.1490.20">
    <property type="entry name" value="ATP-grasp fold, A domain"/>
    <property type="match status" value="1"/>
</dbReference>
<dbReference type="Gene3D" id="3.30.470.20">
    <property type="entry name" value="ATP-grasp fold, B domain"/>
    <property type="match status" value="1"/>
</dbReference>
<dbReference type="HAMAP" id="MF_01552">
    <property type="entry name" value="RimK"/>
    <property type="match status" value="1"/>
</dbReference>
<dbReference type="InterPro" id="IPR011761">
    <property type="entry name" value="ATP-grasp"/>
</dbReference>
<dbReference type="InterPro" id="IPR013651">
    <property type="entry name" value="ATP-grasp_RimK-type"/>
</dbReference>
<dbReference type="InterPro" id="IPR013815">
    <property type="entry name" value="ATP_grasp_subdomain_1"/>
</dbReference>
<dbReference type="InterPro" id="IPR023533">
    <property type="entry name" value="RimK"/>
</dbReference>
<dbReference type="InterPro" id="IPR041107">
    <property type="entry name" value="Rimk_N"/>
</dbReference>
<dbReference type="InterPro" id="IPR004666">
    <property type="entry name" value="Rp_bS6_RimK/Lys_biosynth_LsyX"/>
</dbReference>
<dbReference type="NCBIfam" id="NF007764">
    <property type="entry name" value="PRK10446.1"/>
    <property type="match status" value="1"/>
</dbReference>
<dbReference type="NCBIfam" id="TIGR00768">
    <property type="entry name" value="rimK_fam"/>
    <property type="match status" value="1"/>
</dbReference>
<dbReference type="PANTHER" id="PTHR21621:SF7">
    <property type="entry name" value="RIBOSOMAL PROTEIN BS6--L-GLUTAMATE LIGASE"/>
    <property type="match status" value="1"/>
</dbReference>
<dbReference type="PANTHER" id="PTHR21621">
    <property type="entry name" value="RIBOSOMAL PROTEIN S6 MODIFICATION PROTEIN"/>
    <property type="match status" value="1"/>
</dbReference>
<dbReference type="Pfam" id="PF08443">
    <property type="entry name" value="RimK"/>
    <property type="match status" value="1"/>
</dbReference>
<dbReference type="Pfam" id="PF18030">
    <property type="entry name" value="Rimk_N"/>
    <property type="match status" value="1"/>
</dbReference>
<dbReference type="SUPFAM" id="SSF56059">
    <property type="entry name" value="Glutathione synthetase ATP-binding domain-like"/>
    <property type="match status" value="1"/>
</dbReference>
<dbReference type="PROSITE" id="PS50975">
    <property type="entry name" value="ATP_GRASP"/>
    <property type="match status" value="1"/>
</dbReference>
<keyword id="KW-0067">ATP-binding</keyword>
<keyword id="KW-0436">Ligase</keyword>
<keyword id="KW-0460">Magnesium</keyword>
<keyword id="KW-0464">Manganese</keyword>
<keyword id="KW-0479">Metal-binding</keyword>
<keyword id="KW-0547">Nucleotide-binding</keyword>
<keyword id="KW-0648">Protein biosynthesis</keyword>
<evidence type="ECO:0000255" key="1">
    <source>
        <dbReference type="HAMAP-Rule" id="MF_01552"/>
    </source>
</evidence>
<comment type="cofactor">
    <cofactor evidence="1">
        <name>Mg(2+)</name>
        <dbReference type="ChEBI" id="CHEBI:18420"/>
    </cofactor>
    <cofactor evidence="1">
        <name>Mn(2+)</name>
        <dbReference type="ChEBI" id="CHEBI:29035"/>
    </cofactor>
    <text evidence="1">Binds 2 magnesium or manganese ions per subunit.</text>
</comment>
<comment type="similarity">
    <text evidence="1">Belongs to the RimK family.</text>
</comment>
<gene>
    <name evidence="1" type="primary">rimK</name>
    <name type="ordered locus">LPC_2929</name>
</gene>
<organism>
    <name type="scientific">Legionella pneumophila (strain Corby)</name>
    <dbReference type="NCBI Taxonomy" id="400673"/>
    <lineage>
        <taxon>Bacteria</taxon>
        <taxon>Pseudomonadati</taxon>
        <taxon>Pseudomonadota</taxon>
        <taxon>Gammaproteobacteria</taxon>
        <taxon>Legionellales</taxon>
        <taxon>Legionellaceae</taxon>
        <taxon>Legionella</taxon>
    </lineage>
</organism>
<proteinExistence type="inferred from homology"/>
<reference key="1">
    <citation type="submission" date="2006-11" db="EMBL/GenBank/DDBJ databases">
        <title>Identification and characterization of a new conjugation/ type IVA secretion system (trb/tra) of L. pneumophila Corby localized on a mobile genomic island.</title>
        <authorList>
            <person name="Gloeckner G."/>
            <person name="Albert-Weissenberger C."/>
            <person name="Weinmann E."/>
            <person name="Jacobi S."/>
            <person name="Schunder E."/>
            <person name="Steinert M."/>
            <person name="Buchrieser C."/>
            <person name="Hacker J."/>
            <person name="Heuner K."/>
        </authorList>
    </citation>
    <scope>NUCLEOTIDE SEQUENCE [LARGE SCALE GENOMIC DNA]</scope>
    <source>
        <strain>Corby</strain>
    </source>
</reference>